<gene>
    <name type="primary">SUB2</name>
    <name type="ORF">CHGG_06485</name>
</gene>
<dbReference type="EC" id="3.6.4.13"/>
<dbReference type="EMBL" id="CH408031">
    <property type="protein sequence ID" value="EAQ89866.1"/>
    <property type="molecule type" value="Genomic_DNA"/>
</dbReference>
<dbReference type="RefSeq" id="XP_001222580.1">
    <property type="nucleotide sequence ID" value="XM_001222579.1"/>
</dbReference>
<dbReference type="SMR" id="Q2H4D0"/>
<dbReference type="FunCoup" id="Q2H4D0">
    <property type="interactions" value="1097"/>
</dbReference>
<dbReference type="STRING" id="306901.Q2H4D0"/>
<dbReference type="GeneID" id="4390567"/>
<dbReference type="VEuPathDB" id="FungiDB:CHGG_06485"/>
<dbReference type="eggNOG" id="KOG0329">
    <property type="taxonomic scope" value="Eukaryota"/>
</dbReference>
<dbReference type="HOGENOM" id="CLU_003041_1_0_1"/>
<dbReference type="InParanoid" id="Q2H4D0"/>
<dbReference type="OMA" id="YAHVEPK"/>
<dbReference type="OrthoDB" id="10265785at2759"/>
<dbReference type="Proteomes" id="UP000001056">
    <property type="component" value="Unassembled WGS sequence"/>
</dbReference>
<dbReference type="GO" id="GO:0005681">
    <property type="term" value="C:spliceosomal complex"/>
    <property type="evidence" value="ECO:0007669"/>
    <property type="project" value="UniProtKB-KW"/>
</dbReference>
<dbReference type="GO" id="GO:0005524">
    <property type="term" value="F:ATP binding"/>
    <property type="evidence" value="ECO:0007669"/>
    <property type="project" value="UniProtKB-KW"/>
</dbReference>
<dbReference type="GO" id="GO:0016887">
    <property type="term" value="F:ATP hydrolysis activity"/>
    <property type="evidence" value="ECO:0007669"/>
    <property type="project" value="RHEA"/>
</dbReference>
<dbReference type="GO" id="GO:0003723">
    <property type="term" value="F:RNA binding"/>
    <property type="evidence" value="ECO:0007669"/>
    <property type="project" value="UniProtKB-KW"/>
</dbReference>
<dbReference type="GO" id="GO:0003724">
    <property type="term" value="F:RNA helicase activity"/>
    <property type="evidence" value="ECO:0007669"/>
    <property type="project" value="UniProtKB-EC"/>
</dbReference>
<dbReference type="GO" id="GO:0006397">
    <property type="term" value="P:mRNA processing"/>
    <property type="evidence" value="ECO:0007669"/>
    <property type="project" value="UniProtKB-KW"/>
</dbReference>
<dbReference type="GO" id="GO:0051028">
    <property type="term" value="P:mRNA transport"/>
    <property type="evidence" value="ECO:0007669"/>
    <property type="project" value="UniProtKB-KW"/>
</dbReference>
<dbReference type="GO" id="GO:0008380">
    <property type="term" value="P:RNA splicing"/>
    <property type="evidence" value="ECO:0007669"/>
    <property type="project" value="UniProtKB-KW"/>
</dbReference>
<dbReference type="CDD" id="cd17950">
    <property type="entry name" value="DEADc_DDX39"/>
    <property type="match status" value="1"/>
</dbReference>
<dbReference type="CDD" id="cd18787">
    <property type="entry name" value="SF2_C_DEAD"/>
    <property type="match status" value="1"/>
</dbReference>
<dbReference type="FunFam" id="3.40.50.300:FF:000111">
    <property type="entry name" value="DEAD-box ATP-dependent RNA helicase"/>
    <property type="match status" value="1"/>
</dbReference>
<dbReference type="FunFam" id="3.40.50.300:FF:000168">
    <property type="entry name" value="DEAD-box ATP-dependent RNA helicase 56-like"/>
    <property type="match status" value="1"/>
</dbReference>
<dbReference type="Gene3D" id="3.40.50.300">
    <property type="entry name" value="P-loop containing nucleotide triphosphate hydrolases"/>
    <property type="match status" value="2"/>
</dbReference>
<dbReference type="InterPro" id="IPR011545">
    <property type="entry name" value="DEAD/DEAH_box_helicase_dom"/>
</dbReference>
<dbReference type="InterPro" id="IPR014001">
    <property type="entry name" value="Helicase_ATP-bd"/>
</dbReference>
<dbReference type="InterPro" id="IPR001650">
    <property type="entry name" value="Helicase_C-like"/>
</dbReference>
<dbReference type="InterPro" id="IPR027417">
    <property type="entry name" value="P-loop_NTPase"/>
</dbReference>
<dbReference type="InterPro" id="IPR014014">
    <property type="entry name" value="RNA_helicase_DEAD_Q_motif"/>
</dbReference>
<dbReference type="PANTHER" id="PTHR47958">
    <property type="entry name" value="ATP-DEPENDENT RNA HELICASE DBP3"/>
    <property type="match status" value="1"/>
</dbReference>
<dbReference type="Pfam" id="PF00270">
    <property type="entry name" value="DEAD"/>
    <property type="match status" value="1"/>
</dbReference>
<dbReference type="Pfam" id="PF00271">
    <property type="entry name" value="Helicase_C"/>
    <property type="match status" value="1"/>
</dbReference>
<dbReference type="SMART" id="SM00487">
    <property type="entry name" value="DEXDc"/>
    <property type="match status" value="1"/>
</dbReference>
<dbReference type="SMART" id="SM00490">
    <property type="entry name" value="HELICc"/>
    <property type="match status" value="1"/>
</dbReference>
<dbReference type="SUPFAM" id="SSF52540">
    <property type="entry name" value="P-loop containing nucleoside triphosphate hydrolases"/>
    <property type="match status" value="1"/>
</dbReference>
<dbReference type="PROSITE" id="PS51192">
    <property type="entry name" value="HELICASE_ATP_BIND_1"/>
    <property type="match status" value="1"/>
</dbReference>
<dbReference type="PROSITE" id="PS51194">
    <property type="entry name" value="HELICASE_CTER"/>
    <property type="match status" value="1"/>
</dbReference>
<dbReference type="PROSITE" id="PS51195">
    <property type="entry name" value="Q_MOTIF"/>
    <property type="match status" value="1"/>
</dbReference>
<protein>
    <recommendedName>
        <fullName>ATP-dependent RNA helicase SUB2</fullName>
        <ecNumber>3.6.4.13</ecNumber>
    </recommendedName>
</protein>
<comment type="function">
    <text evidence="1">ATP-binding RNA helicase involved in transcription elongation and required for the export of mRNA out of the nucleus. SUB2 also plays a role in pre-mRNA splicing and spliceosome assembly. May be involved in rDNA and telomeric silencing, and maintenance of genome integrity (By similarity).</text>
</comment>
<comment type="catalytic activity">
    <reaction>
        <text>ATP + H2O = ADP + phosphate + H(+)</text>
        <dbReference type="Rhea" id="RHEA:13065"/>
        <dbReference type="ChEBI" id="CHEBI:15377"/>
        <dbReference type="ChEBI" id="CHEBI:15378"/>
        <dbReference type="ChEBI" id="CHEBI:30616"/>
        <dbReference type="ChEBI" id="CHEBI:43474"/>
        <dbReference type="ChEBI" id="CHEBI:456216"/>
        <dbReference type="EC" id="3.6.4.13"/>
    </reaction>
</comment>
<comment type="subcellular location">
    <subcellularLocation>
        <location evidence="1">Nucleus</location>
    </subcellularLocation>
</comment>
<comment type="domain">
    <text>The Q motif is unique to and characteristic of the DEAD box family of RNA helicases and controls ATP binding and hydrolysis.</text>
</comment>
<comment type="similarity">
    <text evidence="5">Belongs to the DEAD box helicase family. DECD subfamily.</text>
</comment>
<name>SUB2_CHAGB</name>
<evidence type="ECO:0000250" key="1"/>
<evidence type="ECO:0000255" key="2">
    <source>
        <dbReference type="PROSITE-ProRule" id="PRU00541"/>
    </source>
</evidence>
<evidence type="ECO:0000255" key="3">
    <source>
        <dbReference type="PROSITE-ProRule" id="PRU00542"/>
    </source>
</evidence>
<evidence type="ECO:0000256" key="4">
    <source>
        <dbReference type="SAM" id="MobiDB-lite"/>
    </source>
</evidence>
<evidence type="ECO:0000305" key="5"/>
<accession>Q2H4D0</accession>
<feature type="chain" id="PRO_0000256030" description="ATP-dependent RNA helicase SUB2">
    <location>
        <begin position="1"/>
        <end position="434"/>
    </location>
</feature>
<feature type="domain" description="Helicase ATP-binding" evidence="2">
    <location>
        <begin position="81"/>
        <end position="256"/>
    </location>
</feature>
<feature type="domain" description="Helicase C-terminal" evidence="3">
    <location>
        <begin position="268"/>
        <end position="429"/>
    </location>
</feature>
<feature type="region of interest" description="Disordered" evidence="4">
    <location>
        <begin position="1"/>
        <end position="32"/>
    </location>
</feature>
<feature type="short sequence motif" description="Q motif">
    <location>
        <begin position="50"/>
        <end position="78"/>
    </location>
</feature>
<feature type="short sequence motif" description="DEAD box">
    <location>
        <begin position="203"/>
        <end position="206"/>
    </location>
</feature>
<feature type="compositionally biased region" description="Acidic residues" evidence="4">
    <location>
        <begin position="1"/>
        <end position="16"/>
    </location>
</feature>
<feature type="binding site" evidence="2">
    <location>
        <begin position="94"/>
        <end position="101"/>
    </location>
    <ligand>
        <name>ATP</name>
        <dbReference type="ChEBI" id="CHEBI:30616"/>
    </ligand>
</feature>
<reference key="1">
    <citation type="journal article" date="2015" name="Genome Announc.">
        <title>Draft genome sequence of the cellulolytic fungus Chaetomium globosum.</title>
        <authorList>
            <person name="Cuomo C.A."/>
            <person name="Untereiner W.A."/>
            <person name="Ma L.-J."/>
            <person name="Grabherr M."/>
            <person name="Birren B.W."/>
        </authorList>
    </citation>
    <scope>NUCLEOTIDE SEQUENCE [LARGE SCALE GENOMIC DNA]</scope>
    <source>
        <strain>ATCC 6205 / CBS 148.51 / DSM 1962 / NBRC 6347 / NRRL 1970</strain>
    </source>
</reference>
<organism>
    <name type="scientific">Chaetomium globosum (strain ATCC 6205 / CBS 148.51 / DSM 1962 / NBRC 6347 / NRRL 1970)</name>
    <name type="common">Soil fungus</name>
    <dbReference type="NCBI Taxonomy" id="306901"/>
    <lineage>
        <taxon>Eukaryota</taxon>
        <taxon>Fungi</taxon>
        <taxon>Dikarya</taxon>
        <taxon>Ascomycota</taxon>
        <taxon>Pezizomycotina</taxon>
        <taxon>Sordariomycetes</taxon>
        <taxon>Sordariomycetidae</taxon>
        <taxon>Sordariales</taxon>
        <taxon>Chaetomiaceae</taxon>
        <taxon>Chaetomium</taxon>
    </lineage>
</organism>
<proteinExistence type="inferred from homology"/>
<sequence length="434" mass="49147">MSGEEDLIDYSDDELNNETTAPASNGKKGDAAAAAQNVDKKGSYVGIHSTGFRDFLLKPELLRAIADCGFEHPSEVQQTCIPQAMLGGDIICQAKSGLGKTAVFVLTTLQQVEPVAGECSVLVMCHTRELAFQIRNEYNRFSKYMPDIKTGVFYGGTPIQKDAEVLKNKETHPHIIVGTPGRLNALVRDKHLRLGNVRMFVLDECDKMLDQIDMRRDVQEIFRATPQQKQVMMFSATLADEIKPICRKFMQNPTEHYVDEDTKLTLHGLQQYYIPLEEREKNRKLNELLDELQFNQVIIFVKSTIRATELDKLLRECNFPSIAVHSGVSQEERIRRYKEFKEFNKRICVATDVFGRGIDIERINLAINYDLPADADSYLHRVGRAGRFGTKGLAISFVNSDQDKEVLQQIEKRFEVALPEFPKEGIDASTYMAA</sequence>
<keyword id="KW-0067">ATP-binding</keyword>
<keyword id="KW-0347">Helicase</keyword>
<keyword id="KW-0378">Hydrolase</keyword>
<keyword id="KW-0507">mRNA processing</keyword>
<keyword id="KW-0508">mRNA splicing</keyword>
<keyword id="KW-0509">mRNA transport</keyword>
<keyword id="KW-0547">Nucleotide-binding</keyword>
<keyword id="KW-0539">Nucleus</keyword>
<keyword id="KW-1185">Reference proteome</keyword>
<keyword id="KW-0694">RNA-binding</keyword>
<keyword id="KW-0747">Spliceosome</keyword>
<keyword id="KW-0813">Transport</keyword>